<accession>P69435</accession>
<accession>P75907</accession>
<proteinExistence type="inferred from homology"/>
<sequence length="807" mass="92207">MYSSSRKRCPKTKWALKLLTAAFLAASPAAKSAVNNAYDALIIEARKGNTQPALSWFALKSALSNNQIADWLQIALWAGQDKQVITVYNRYRHQQLPARGYAAVAVAYRNLQQWQNSLTLWQKALSLEPQNKDYQRGQILTLADAGHYDTALVKLKQLNSGAPDKANLLAEAYIYKLAGRHQDELRAMTESLPENASTQQYPTEYVQALRNNQLAAAIDDANLTPDIRADIHAELVRLSFMPTRSESERYAIADRALAQYAALEILWHDNPDRTAQYQRIQVDHLGALLTRDRYKDVISHYQRLKKTGQIIPPWGQYWVASAYLKDHQPKKAQSIMTELFYHKETIAPDLSDEELADLFYSHLESENYPGALTVTQHTINTSPPFLRLMGTPTSIPNDTWLQGHSFLSTVAKYSNDLPQAEMTARELAYNAPGNQGLRIDYASVLQARGWPRAAENELKKAEVIEPRNINLEVEQAWTALTLQEWQQAAVLTHDVVEREPQDPGVVRLKRAVDVHNLAELRIAGSTGIDAEGPDSGKHDVDLTTIVYSPPLKDNWRGFAGFGYADGQFSEGKGIVRDWLAGVEWRSRNIWLEAEYAERVFNHEHKPGARLSGWYDFNDNWRIGSQLERLSHRVPLRAMKNGVTGNSAQAYVRWYQNERRKYGVSWAFTDFSDSNQRHEVSLEGQERIWSSPYLIVDFLPSLYYEQNTEHDTPYYNPIKTFDIVPAFEASHLLWRSYENSWEQIFSAGVGASWQKHYGTDVVTQLGYGQRISWNDVIDAGATLRWEKRPYDGDREHNLYVEFDMTFRF</sequence>
<organism>
    <name type="scientific">Escherichia coli O157:H7</name>
    <dbReference type="NCBI Taxonomy" id="83334"/>
    <lineage>
        <taxon>Bacteria</taxon>
        <taxon>Pseudomonadati</taxon>
        <taxon>Pseudomonadota</taxon>
        <taxon>Gammaproteobacteria</taxon>
        <taxon>Enterobacterales</taxon>
        <taxon>Enterobacteriaceae</taxon>
        <taxon>Escherichia</taxon>
    </lineage>
</organism>
<comment type="function">
    <text evidence="1">Exports the biofilm adhesin polysaccharide poly-beta-1,6-N-acetyl-D-glucosamine (PGA) across the outer membrane. The PGA transported seems to be partially N-deacetylated since N-deacetylation of PGA by PgaB is needed for PGA export through the PgaA porin (By similarity).</text>
</comment>
<comment type="subcellular location">
    <subcellularLocation>
        <location evidence="1">Cell outer membrane</location>
        <topology evidence="1">Multi-pass membrane protein</topology>
    </subcellularLocation>
</comment>
<comment type="domain">
    <text evidence="1">Contains a predicted C-terminal beta-barrel porin domain and a N-terminal periplasmic superhelical domain containing tetratricopeptide repeats, which may mediate protein-protein interactions, perhaps with PgaB.</text>
</comment>
<evidence type="ECO:0000250" key="1"/>
<evidence type="ECO:0000255" key="2"/>
<gene>
    <name type="primary">pgaA</name>
    <name type="ordered locus">Z1526</name>
    <name type="ordered locus">ECs1270</name>
</gene>
<reference key="1">
    <citation type="journal article" date="2001" name="Nature">
        <title>Genome sequence of enterohaemorrhagic Escherichia coli O157:H7.</title>
        <authorList>
            <person name="Perna N.T."/>
            <person name="Plunkett G. III"/>
            <person name="Burland V."/>
            <person name="Mau B."/>
            <person name="Glasner J.D."/>
            <person name="Rose D.J."/>
            <person name="Mayhew G.F."/>
            <person name="Evans P.S."/>
            <person name="Gregor J."/>
            <person name="Kirkpatrick H.A."/>
            <person name="Posfai G."/>
            <person name="Hackett J."/>
            <person name="Klink S."/>
            <person name="Boutin A."/>
            <person name="Shao Y."/>
            <person name="Miller L."/>
            <person name="Grotbeck E.J."/>
            <person name="Davis N.W."/>
            <person name="Lim A."/>
            <person name="Dimalanta E.T."/>
            <person name="Potamousis K."/>
            <person name="Apodaca J."/>
            <person name="Anantharaman T.S."/>
            <person name="Lin J."/>
            <person name="Yen G."/>
            <person name="Schwartz D.C."/>
            <person name="Welch R.A."/>
            <person name="Blattner F.R."/>
        </authorList>
    </citation>
    <scope>NUCLEOTIDE SEQUENCE [LARGE SCALE GENOMIC DNA]</scope>
    <source>
        <strain>O157:H7 / EDL933 / ATCC 700927 / EHEC</strain>
    </source>
</reference>
<reference key="2">
    <citation type="journal article" date="2001" name="DNA Res.">
        <title>Complete genome sequence of enterohemorrhagic Escherichia coli O157:H7 and genomic comparison with a laboratory strain K-12.</title>
        <authorList>
            <person name="Hayashi T."/>
            <person name="Makino K."/>
            <person name="Ohnishi M."/>
            <person name="Kurokawa K."/>
            <person name="Ishii K."/>
            <person name="Yokoyama K."/>
            <person name="Han C.-G."/>
            <person name="Ohtsubo E."/>
            <person name="Nakayama K."/>
            <person name="Murata T."/>
            <person name="Tanaka M."/>
            <person name="Tobe T."/>
            <person name="Iida T."/>
            <person name="Takami H."/>
            <person name="Honda T."/>
            <person name="Sasakawa C."/>
            <person name="Ogasawara N."/>
            <person name="Yasunaga T."/>
            <person name="Kuhara S."/>
            <person name="Shiba T."/>
            <person name="Hattori M."/>
            <person name="Shinagawa H."/>
        </authorList>
    </citation>
    <scope>NUCLEOTIDE SEQUENCE [LARGE SCALE GENOMIC DNA]</scope>
    <source>
        <strain>O157:H7 / Sakai / RIMD 0509952 / EHEC</strain>
    </source>
</reference>
<name>PGAA_ECO57</name>
<feature type="signal peptide" evidence="2">
    <location>
        <begin position="1"/>
        <end position="26"/>
    </location>
</feature>
<feature type="chain" id="PRO_0000035695" description="Poly-beta-1,6-N-acetyl-D-glucosamine export protein">
    <location>
        <begin position="27"/>
        <end position="807"/>
    </location>
</feature>
<feature type="repeat" description="TPR 1">
    <location>
        <begin position="98"/>
        <end position="131"/>
    </location>
</feature>
<feature type="repeat" description="TPR 2">
    <location>
        <begin position="165"/>
        <end position="198"/>
    </location>
</feature>
<feature type="repeat" description="TPR 3">
    <location>
        <begin position="279"/>
        <end position="311"/>
    </location>
</feature>
<keyword id="KW-0998">Cell outer membrane</keyword>
<keyword id="KW-0472">Membrane</keyword>
<keyword id="KW-1185">Reference proteome</keyword>
<keyword id="KW-0677">Repeat</keyword>
<keyword id="KW-0732">Signal</keyword>
<keyword id="KW-0802">TPR repeat</keyword>
<keyword id="KW-0812">Transmembrane</keyword>
<keyword id="KW-1134">Transmembrane beta strand</keyword>
<keyword id="KW-0813">Transport</keyword>
<protein>
    <recommendedName>
        <fullName>Poly-beta-1,6-N-acetyl-D-glucosamine export protein</fullName>
        <shortName>PGA export protein</shortName>
        <shortName>Poly-beta-1,6-GlcNAc export protein</shortName>
    </recommendedName>
</protein>
<dbReference type="EMBL" id="AE005174">
    <property type="protein sequence ID" value="AAG55642.1"/>
    <property type="molecule type" value="Genomic_DNA"/>
</dbReference>
<dbReference type="EMBL" id="BA000007">
    <property type="protein sequence ID" value="BAB34693.1"/>
    <property type="molecule type" value="Genomic_DNA"/>
</dbReference>
<dbReference type="PIR" id="F90787">
    <property type="entry name" value="F90787"/>
</dbReference>
<dbReference type="RefSeq" id="NP_309297.1">
    <property type="nucleotide sequence ID" value="NC_002695.1"/>
</dbReference>
<dbReference type="RefSeq" id="WP_000287458.1">
    <property type="nucleotide sequence ID" value="NZ_VOAI01000026.1"/>
</dbReference>
<dbReference type="SMR" id="P69435"/>
<dbReference type="STRING" id="155864.Z1526"/>
<dbReference type="GeneID" id="912850"/>
<dbReference type="KEGG" id="ece:Z1526"/>
<dbReference type="KEGG" id="ecs:ECs_1270"/>
<dbReference type="PATRIC" id="fig|386585.9.peg.1378"/>
<dbReference type="eggNOG" id="COG0457">
    <property type="taxonomic scope" value="Bacteria"/>
</dbReference>
<dbReference type="HOGENOM" id="CLU_018289_0_0_6"/>
<dbReference type="OMA" id="WDKRPYD"/>
<dbReference type="Proteomes" id="UP000000558">
    <property type="component" value="Chromosome"/>
</dbReference>
<dbReference type="Proteomes" id="UP000002519">
    <property type="component" value="Chromosome"/>
</dbReference>
<dbReference type="GO" id="GO:0009279">
    <property type="term" value="C:cell outer membrane"/>
    <property type="evidence" value="ECO:0007669"/>
    <property type="project" value="UniProtKB-SubCell"/>
</dbReference>
<dbReference type="GO" id="GO:1901515">
    <property type="term" value="F:poly-beta-1,6-N-acetyl-D-glucosamine transmembrane transporter activity"/>
    <property type="evidence" value="ECO:0007669"/>
    <property type="project" value="InterPro"/>
</dbReference>
<dbReference type="FunFam" id="1.25.40.10:FF:000337">
    <property type="entry name" value="Poly-beta-1,6 N-acetyl-D-glucosamine export porin PgaA"/>
    <property type="match status" value="1"/>
</dbReference>
<dbReference type="Gene3D" id="1.25.40.10">
    <property type="entry name" value="Tetratricopeptide repeat domain"/>
    <property type="match status" value="2"/>
</dbReference>
<dbReference type="InterPro" id="IPR023870">
    <property type="entry name" value="PGA_export_porin_PgaA"/>
</dbReference>
<dbReference type="InterPro" id="IPR049003">
    <property type="entry name" value="PgaA_barrel"/>
</dbReference>
<dbReference type="InterPro" id="IPR011990">
    <property type="entry name" value="TPR-like_helical_dom_sf"/>
</dbReference>
<dbReference type="InterPro" id="IPR019734">
    <property type="entry name" value="TPR_rpt"/>
</dbReference>
<dbReference type="NCBIfam" id="TIGR03939">
    <property type="entry name" value="PGA_TPR_OMP"/>
    <property type="match status" value="1"/>
</dbReference>
<dbReference type="NCBIfam" id="NF007468">
    <property type="entry name" value="PRK10049.1"/>
    <property type="match status" value="1"/>
</dbReference>
<dbReference type="Pfam" id="PF21197">
    <property type="entry name" value="PgaA_barrel"/>
    <property type="match status" value="1"/>
</dbReference>
<dbReference type="SMART" id="SM00028">
    <property type="entry name" value="TPR"/>
    <property type="match status" value="1"/>
</dbReference>
<dbReference type="SUPFAM" id="SSF48452">
    <property type="entry name" value="TPR-like"/>
    <property type="match status" value="2"/>
</dbReference>
<dbReference type="PROSITE" id="PS50005">
    <property type="entry name" value="TPR"/>
    <property type="match status" value="1"/>
</dbReference>
<dbReference type="PROSITE" id="PS50293">
    <property type="entry name" value="TPR_REGION"/>
    <property type="match status" value="1"/>
</dbReference>